<comment type="function">
    <text evidence="1">Plays an essential role in virion assembly and morphogenesis. Also plays a role in the inhibition of host immune response by dysregulating mTOR. Sequesters host RICTOR and RPTOR, thereby disrupting mTORC1 and mTORC2 crosstalk. In turn, blocks the host antiviral response in part through mTOR-dependent degradation of cGAS, the primary poxvirus sensor.</text>
</comment>
<comment type="subunit">
    <text evidence="1">Self-associates to form high molecular-weight forms. Interacts with protein OPG157. Interacts with host RICTOR and RPTOR; these interactions disrupt the mTORC1 and mTORC2 crosstalk.</text>
</comment>
<comment type="subcellular location">
    <subcellularLocation>
        <location evidence="1">Virion</location>
    </subcellularLocation>
    <text evidence="1">Major component of the virion comprising about 10% of the virion mass.</text>
</comment>
<comment type="PTM">
    <text evidence="1">Phosphorylated on two serines.</text>
</comment>
<comment type="similarity">
    <text evidence="3">Belongs to the orthopoxvirus OPG062 family.</text>
</comment>
<accession>Q9J5B7</accession>
<keyword id="KW-0238">DNA-binding</keyword>
<keyword id="KW-0945">Host-virus interaction</keyword>
<keyword id="KW-1090">Inhibition of host innate immune response by virus</keyword>
<keyword id="KW-0426">Late protein</keyword>
<keyword id="KW-0597">Phosphoprotein</keyword>
<keyword id="KW-1185">Reference proteome</keyword>
<keyword id="KW-0899">Viral immunoevasion</keyword>
<keyword id="KW-0946">Virion</keyword>
<protein>
    <recommendedName>
        <fullName>Phosphoprotein OPG062</fullName>
    </recommendedName>
    <alternativeName>
        <fullName>Phosphoprotein F17</fullName>
    </alternativeName>
</protein>
<reference key="1">
    <citation type="journal article" date="2000" name="J. Virol.">
        <title>The genome of fowlpox virus.</title>
        <authorList>
            <person name="Afonso C.L."/>
            <person name="Tulman E.R."/>
            <person name="Lu Z."/>
            <person name="Zsak L."/>
            <person name="Kutish G.F."/>
            <person name="Rock D.L."/>
        </authorList>
    </citation>
    <scope>NUCLEOTIDE SEQUENCE [LARGE SCALE GENOMIC DNA]</scope>
</reference>
<proteinExistence type="inferred from homology"/>
<organismHost>
    <name type="scientific">Vertebrata</name>
    <dbReference type="NCBI Taxonomy" id="7742"/>
</organismHost>
<evidence type="ECO:0000250" key="1">
    <source>
        <dbReference type="UniProtKB" id="P07396"/>
    </source>
</evidence>
<evidence type="ECO:0000256" key="2">
    <source>
        <dbReference type="SAM" id="MobiDB-lite"/>
    </source>
</evidence>
<evidence type="ECO:0000305" key="3"/>
<feature type="chain" id="PRO_0000099523" description="Phosphoprotein OPG062">
    <location>
        <begin position="1"/>
        <end position="114"/>
    </location>
</feature>
<feature type="region of interest" description="Disordered" evidence="2">
    <location>
        <begin position="58"/>
        <end position="86"/>
    </location>
</feature>
<feature type="compositionally biased region" description="Low complexity" evidence="2">
    <location>
        <begin position="76"/>
        <end position="86"/>
    </location>
</feature>
<feature type="modified residue" description="Phosphoserine" evidence="1">
    <location>
        <position position="60"/>
    </location>
</feature>
<feature type="modified residue" description="Phosphoserine" evidence="1">
    <location>
        <position position="69"/>
    </location>
</feature>
<sequence length="114" mass="12742">MEESAGTPFHDPKYFVSPFILNTDEGRYLVLKAIKLCNVRTIDCMKQETSCVLKVDKPQSPCPISSSDSAPKCYMQQTSPQQQRQAPQLRFINTGALSNLFANTTDKAARVINQ</sequence>
<organism>
    <name type="scientific">Fowlpox virus (strain NVSL)</name>
    <name type="common">FPV</name>
    <dbReference type="NCBI Taxonomy" id="928301"/>
    <lineage>
        <taxon>Viruses</taxon>
        <taxon>Varidnaviria</taxon>
        <taxon>Bamfordvirae</taxon>
        <taxon>Nucleocytoviricota</taxon>
        <taxon>Pokkesviricetes</taxon>
        <taxon>Chitovirales</taxon>
        <taxon>Poxviridae</taxon>
        <taxon>Chordopoxvirinae</taxon>
        <taxon>Avipoxvirus</taxon>
        <taxon>Fowlpox virus</taxon>
    </lineage>
</organism>
<dbReference type="EMBL" id="AF198100">
    <property type="protein sequence ID" value="AAF44447.1"/>
    <property type="molecule type" value="Genomic_DNA"/>
</dbReference>
<dbReference type="RefSeq" id="NP_039066.1">
    <property type="nucleotide sequence ID" value="NC_002188.1"/>
</dbReference>
<dbReference type="GeneID" id="1486651"/>
<dbReference type="KEGG" id="vg:1486651"/>
<dbReference type="Proteomes" id="UP000008597">
    <property type="component" value="Segment"/>
</dbReference>
<dbReference type="GO" id="GO:0044423">
    <property type="term" value="C:virion component"/>
    <property type="evidence" value="ECO:0007669"/>
    <property type="project" value="UniProtKB-KW"/>
</dbReference>
<dbReference type="GO" id="GO:0003677">
    <property type="term" value="F:DNA binding"/>
    <property type="evidence" value="ECO:0007669"/>
    <property type="project" value="UniProtKB-KW"/>
</dbReference>
<dbReference type="GO" id="GO:0052170">
    <property type="term" value="P:symbiont-mediated suppression of host innate immune response"/>
    <property type="evidence" value="ECO:0007669"/>
    <property type="project" value="UniProtKB-KW"/>
</dbReference>
<dbReference type="GO" id="GO:0019082">
    <property type="term" value="P:viral protein processing"/>
    <property type="evidence" value="ECO:0007669"/>
    <property type="project" value="InterPro"/>
</dbReference>
<dbReference type="InterPro" id="IPR006854">
    <property type="entry name" value="Phosphoprotein_F17"/>
</dbReference>
<dbReference type="Pfam" id="PF04767">
    <property type="entry name" value="Pox_F17"/>
    <property type="match status" value="1"/>
</dbReference>
<dbReference type="PIRSF" id="PIRSF003688">
    <property type="entry name" value="VAC_PP"/>
    <property type="match status" value="1"/>
</dbReference>
<name>PG062_FOWPN</name>
<gene>
    <name type="primary">OPG062</name>
    <name type="ordered locus">FPV103</name>
</gene>